<sequence length="285" mass="33531">MMSDYTWFEGIPFPAFWFSKEILENSCKKFVVKEDDLIILTYPKSGTNWLIEIVCLIQTKGDPKWIQSMPIWDRSPWIETGSGYDKLTKMEGPRLMTSHLPMHLFSKSLFSSKAKVIYLIRNPRDVLVSAYFFWSKIALEKKPDSLGTYVEWFLKGNVAYGSWFEHIRGWLSMREWDNFLVLYYEDMKKDTMGSIKKICDFLGKKLEPDELNLVLKYSSFQVVKENNMSNYSLMEKELILTGFTFMRKGTTNDWKNHFTVAQAEAFDKVFQEKMAGFPPGMFPWE</sequence>
<protein>
    <recommendedName>
        <fullName evidence="8">Sulfotransferase 2A2</fullName>
        <shortName>ST2A2</shortName>
        <ecNumber evidence="3">2.8.2.2</ecNumber>
    </recommendedName>
    <alternativeName>
        <fullName evidence="6">Hydroxysteroid sulfotransferase</fullName>
        <shortName evidence="6">ST</shortName>
    </alternativeName>
    <alternativeName>
        <fullName evidence="9">ST-60</fullName>
    </alternativeName>
    <alternativeName>
        <fullName evidence="4 5">Senescence marker protein 2</fullName>
        <shortName evidence="4 5">SMP-2</shortName>
    </alternativeName>
</protein>
<organism>
    <name type="scientific">Rattus norvegicus</name>
    <name type="common">Rat</name>
    <dbReference type="NCBI Taxonomy" id="10116"/>
    <lineage>
        <taxon>Eukaryota</taxon>
        <taxon>Metazoa</taxon>
        <taxon>Chordata</taxon>
        <taxon>Craniata</taxon>
        <taxon>Vertebrata</taxon>
        <taxon>Euteleostomi</taxon>
        <taxon>Mammalia</taxon>
        <taxon>Eutheria</taxon>
        <taxon>Euarchontoglires</taxon>
        <taxon>Glires</taxon>
        <taxon>Rodentia</taxon>
        <taxon>Myomorpha</taxon>
        <taxon>Muroidea</taxon>
        <taxon>Muridae</taxon>
        <taxon>Murinae</taxon>
        <taxon>Rattus</taxon>
    </lineage>
</organism>
<name>ST2A2_RAT</name>
<comment type="function">
    <text evidence="3">Sulfotransferase that utilizes 3'-phospho-5'-adenylyl sulfate (PAPS) as sulfonate donor to catalyze the sulfate conjugation of a potential wide variety of acceptor molecules bearing a hydroxyl group. Sulfonation increases the water solubility of most compounds, and therefore their renal excretion, but it can also result in bioactivation to form active metabolites.</text>
</comment>
<comment type="catalytic activity">
    <reaction evidence="3">
        <text>an alcohol + 3'-phosphoadenylyl sulfate = an alkyl sulfate + adenosine 3',5'-bisphosphate + H(+)</text>
        <dbReference type="Rhea" id="RHEA:22552"/>
        <dbReference type="ChEBI" id="CHEBI:15378"/>
        <dbReference type="ChEBI" id="CHEBI:30879"/>
        <dbReference type="ChEBI" id="CHEBI:58339"/>
        <dbReference type="ChEBI" id="CHEBI:58343"/>
        <dbReference type="ChEBI" id="CHEBI:83414"/>
        <dbReference type="EC" id="2.8.2.2"/>
    </reaction>
    <physiologicalReaction direction="left-to-right" evidence="8">
        <dbReference type="Rhea" id="RHEA:22553"/>
    </physiologicalReaction>
</comment>
<comment type="subcellular location">
    <subcellularLocation>
        <location evidence="1">Cytoplasm</location>
    </subcellularLocation>
</comment>
<comment type="tissue specificity">
    <text evidence="3">Detected in liver.</text>
</comment>
<comment type="induction">
    <text>Induced by estrogens and suppressed by androgens. Expression is under the influence of pituitary growth hormone and thyroid hormone.</text>
</comment>
<comment type="similarity">
    <text evidence="7">Belongs to the sulfotransferase 1 family.</text>
</comment>
<comment type="sequence caution" evidence="7">
    <conflict type="miscellaneous discrepancy">
        <sequence resource="EMBL-CDS" id="AAB57741"/>
    </conflict>
    <text>This sequence has numerous conflicts with the rat genome and cannot be definitely assigned to one of the Sult2a genes.</text>
</comment>
<keyword id="KW-0963">Cytoplasm</keyword>
<keyword id="KW-0443">Lipid metabolism</keyword>
<keyword id="KW-1185">Reference proteome</keyword>
<keyword id="KW-0753">Steroid metabolism</keyword>
<keyword id="KW-0808">Transferase</keyword>
<feature type="chain" id="PRO_0000085146" description="Sulfotransferase 2A2">
    <location>
        <begin position="1"/>
        <end position="285"/>
    </location>
</feature>
<feature type="active site" description="Proton acceptor" evidence="2">
    <location>
        <position position="99"/>
    </location>
</feature>
<feature type="binding site" evidence="2">
    <location>
        <position position="44"/>
    </location>
    <ligand>
        <name>3'-phosphoadenylyl sulfate</name>
        <dbReference type="ChEBI" id="CHEBI:58339"/>
    </ligand>
</feature>
<feature type="binding site" evidence="2">
    <location>
        <position position="45"/>
    </location>
    <ligand>
        <name>3'-phosphoadenylyl sulfate</name>
        <dbReference type="ChEBI" id="CHEBI:58339"/>
    </ligand>
</feature>
<feature type="binding site" evidence="2">
    <location>
        <position position="46"/>
    </location>
    <ligand>
        <name>3'-phosphoadenylyl sulfate</name>
        <dbReference type="ChEBI" id="CHEBI:58339"/>
    </ligand>
</feature>
<feature type="binding site" evidence="2">
    <location>
        <position position="47"/>
    </location>
    <ligand>
        <name>3'-phosphoadenylyl sulfate</name>
        <dbReference type="ChEBI" id="CHEBI:58339"/>
    </ligand>
</feature>
<feature type="binding site" evidence="2">
    <location>
        <position position="48"/>
    </location>
    <ligand>
        <name>3'-phosphoadenylyl sulfate</name>
        <dbReference type="ChEBI" id="CHEBI:58339"/>
    </ligand>
</feature>
<feature type="binding site" evidence="2">
    <location>
        <position position="49"/>
    </location>
    <ligand>
        <name>3'-phosphoadenylyl sulfate</name>
        <dbReference type="ChEBI" id="CHEBI:58339"/>
    </ligand>
</feature>
<feature type="binding site" evidence="2">
    <location>
        <position position="121"/>
    </location>
    <ligand>
        <name>3'-phosphoadenylyl sulfate</name>
        <dbReference type="ChEBI" id="CHEBI:58339"/>
    </ligand>
</feature>
<feature type="binding site" evidence="2">
    <location>
        <position position="129"/>
    </location>
    <ligand>
        <name>3'-phosphoadenylyl sulfate</name>
        <dbReference type="ChEBI" id="CHEBI:58339"/>
    </ligand>
</feature>
<feature type="binding site" evidence="2">
    <location>
        <position position="184"/>
    </location>
    <ligand>
        <name>3'-phosphoadenylyl sulfate</name>
        <dbReference type="ChEBI" id="CHEBI:58339"/>
    </ligand>
</feature>
<feature type="binding site" evidence="2">
    <location>
        <position position="218"/>
    </location>
    <ligand>
        <name>3'-phosphoadenylyl sulfate</name>
        <dbReference type="ChEBI" id="CHEBI:58339"/>
    </ligand>
</feature>
<feature type="binding site" evidence="2">
    <location>
        <position position="247"/>
    </location>
    <ligand>
        <name>3'-phosphoadenylyl sulfate</name>
        <dbReference type="ChEBI" id="CHEBI:58339"/>
    </ligand>
</feature>
<feature type="binding site" evidence="2">
    <location>
        <position position="248"/>
    </location>
    <ligand>
        <name>3'-phosphoadenylyl sulfate</name>
        <dbReference type="ChEBI" id="CHEBI:58339"/>
    </ligand>
</feature>
<feature type="binding site" evidence="2">
    <location>
        <position position="249"/>
    </location>
    <ligand>
        <name>3'-phosphoadenylyl sulfate</name>
        <dbReference type="ChEBI" id="CHEBI:58339"/>
    </ligand>
</feature>
<gene>
    <name evidence="10" type="primary">Sult2a2</name>
</gene>
<evidence type="ECO:0000250" key="1">
    <source>
        <dbReference type="UniProtKB" id="P17988"/>
    </source>
</evidence>
<evidence type="ECO:0000250" key="2">
    <source>
        <dbReference type="UniProtKB" id="Q06520"/>
    </source>
</evidence>
<evidence type="ECO:0000269" key="3">
    <source>
    </source>
</evidence>
<evidence type="ECO:0000303" key="4">
    <source>
    </source>
</evidence>
<evidence type="ECO:0000303" key="5">
    <source>
    </source>
</evidence>
<evidence type="ECO:0000303" key="6">
    <source>
    </source>
</evidence>
<evidence type="ECO:0000305" key="7"/>
<evidence type="ECO:0000305" key="8">
    <source>
    </source>
</evidence>
<evidence type="ECO:0000312" key="9">
    <source>
        <dbReference type="EMBL" id="BAA03634.1"/>
    </source>
</evidence>
<evidence type="ECO:0000312" key="10">
    <source>
        <dbReference type="RGD" id="1306542"/>
    </source>
</evidence>
<reference key="1">
    <citation type="journal article" date="1994" name="Chem. Biol. Interact.">
        <title>Molecular cloning and functions of rat liver hydroxysteroid sulfotransferases catalysing covalent binding of carcinogenic polycyclic arylmethanols to DNA.</title>
        <authorList>
            <person name="Watabe T."/>
            <person name="Ogura K."/>
            <person name="Satsukawa M."/>
            <person name="Okuda H."/>
            <person name="Hiratsuka A."/>
        </authorList>
    </citation>
    <scope>NUCLEOTIDE SEQUENCE [MRNA]</scope>
    <scope>FUNCTION</scope>
    <scope>CATALYTIC ACTIVITY</scope>
    <source>
        <strain>Sprague-Dawley</strain>
        <tissue>Liver</tissue>
    </source>
</reference>
<reference key="2">
    <citation type="journal article" date="1987" name="J. Biol. Chem.">
        <title>Molecular cloning and characterization of cDNA for androgen-repressible rat liver protein, SMP-2.</title>
        <authorList>
            <person name="Chatterjee B."/>
            <person name="Majumdar D."/>
            <person name="Ozbilen O."/>
            <person name="Murty C.V.R."/>
            <person name="Roy A.K."/>
        </authorList>
    </citation>
    <scope>NUCLEOTIDE SEQUENCE [MRNA]</scope>
    <source>
        <strain>Sprague-Dawley</strain>
    </source>
</reference>
<reference key="3">
    <citation type="journal article" date="1990" name="Biochemistry">
        <title>Structure and regulation of the senescence marker protein 2 gene promoter.</title>
        <authorList>
            <person name="Song C.S."/>
            <person name="Kim J.M."/>
            <person name="Roy A.K."/>
            <person name="Chatterjee B."/>
        </authorList>
    </citation>
    <scope>NUCLEOTIDE SEQUENCE [GENOMIC DNA] OF 2-68</scope>
</reference>
<dbReference type="EC" id="2.8.2.2" evidence="3"/>
<dbReference type="EMBL" id="D14989">
    <property type="protein sequence ID" value="BAA03634.1"/>
    <property type="molecule type" value="mRNA"/>
</dbReference>
<dbReference type="EMBL" id="J02643">
    <property type="protein sequence ID" value="AAB57741.1"/>
    <property type="status" value="ALT_SEQ"/>
    <property type="molecule type" value="mRNA"/>
</dbReference>
<dbReference type="EMBL" id="M29302">
    <property type="protein sequence ID" value="AAA42152.1"/>
    <property type="molecule type" value="Genomic_DNA"/>
</dbReference>
<dbReference type="PIR" id="A26136">
    <property type="entry name" value="A26136"/>
</dbReference>
<dbReference type="PIR" id="I65760">
    <property type="entry name" value="I65760"/>
</dbReference>
<dbReference type="RefSeq" id="NP_001020302.1">
    <property type="nucleotide sequence ID" value="NM_001025131.2"/>
</dbReference>
<dbReference type="SMR" id="P50235"/>
<dbReference type="FunCoup" id="P50235">
    <property type="interactions" value="57"/>
</dbReference>
<dbReference type="STRING" id="10116.ENSRNOP00000071849"/>
<dbReference type="PhosphoSitePlus" id="P50235"/>
<dbReference type="PaxDb" id="10116-ENSRNOP00000045076"/>
<dbReference type="Ensembl" id="ENSRNOT00000110958.1">
    <property type="protein sequence ID" value="ENSRNOP00000082415.1"/>
    <property type="gene ID" value="ENSRNOG00000062869.1"/>
</dbReference>
<dbReference type="GeneID" id="361510"/>
<dbReference type="KEGG" id="rno:361510"/>
<dbReference type="AGR" id="RGD:1306542"/>
<dbReference type="CTD" id="100043194"/>
<dbReference type="RGD" id="1306542">
    <property type="gene designation" value="Sult2a2"/>
</dbReference>
<dbReference type="VEuPathDB" id="HostDB:ENSRNOG00000063815"/>
<dbReference type="eggNOG" id="KOG1584">
    <property type="taxonomic scope" value="Eukaryota"/>
</dbReference>
<dbReference type="GeneTree" id="ENSGT00940000154432"/>
<dbReference type="InParanoid" id="P50235"/>
<dbReference type="OMA" id="DTPYHRH"/>
<dbReference type="OrthoDB" id="205623at2759"/>
<dbReference type="PhylomeDB" id="P50235"/>
<dbReference type="Reactome" id="R-RNO-156584">
    <property type="pathway name" value="Cytosolic sulfonation of small molecules"/>
</dbReference>
<dbReference type="Reactome" id="R-RNO-9753281">
    <property type="pathway name" value="Paracetamol ADME"/>
</dbReference>
<dbReference type="PRO" id="PR:P50235"/>
<dbReference type="Proteomes" id="UP000002494">
    <property type="component" value="Chromosome 1"/>
</dbReference>
<dbReference type="Bgee" id="ENSRNOG00000047986">
    <property type="expression patterns" value="Expressed in liver and 16 other cell types or tissues"/>
</dbReference>
<dbReference type="ExpressionAtlas" id="P50235">
    <property type="expression patterns" value="baseline and differential"/>
</dbReference>
<dbReference type="GO" id="GO:0005737">
    <property type="term" value="C:cytoplasm"/>
    <property type="evidence" value="ECO:0000318"/>
    <property type="project" value="GO_Central"/>
</dbReference>
<dbReference type="GO" id="GO:0004027">
    <property type="term" value="F:alcohol sulfotransferase activity"/>
    <property type="evidence" value="ECO:0007669"/>
    <property type="project" value="UniProtKB-EC"/>
</dbReference>
<dbReference type="GO" id="GO:0008202">
    <property type="term" value="P:steroid metabolic process"/>
    <property type="evidence" value="ECO:0007669"/>
    <property type="project" value="UniProtKB-KW"/>
</dbReference>
<dbReference type="GO" id="GO:0051923">
    <property type="term" value="P:sulfation"/>
    <property type="evidence" value="ECO:0000318"/>
    <property type="project" value="GO_Central"/>
</dbReference>
<dbReference type="FunFam" id="3.40.50.300:FF:000433">
    <property type="entry name" value="Estrogen sulfotransferase"/>
    <property type="match status" value="1"/>
</dbReference>
<dbReference type="Gene3D" id="3.40.50.300">
    <property type="entry name" value="P-loop containing nucleotide triphosphate hydrolases"/>
    <property type="match status" value="1"/>
</dbReference>
<dbReference type="InterPro" id="IPR027417">
    <property type="entry name" value="P-loop_NTPase"/>
</dbReference>
<dbReference type="InterPro" id="IPR000863">
    <property type="entry name" value="Sulfotransferase_dom"/>
</dbReference>
<dbReference type="PANTHER" id="PTHR11783">
    <property type="entry name" value="SULFOTRANSFERASE SULT"/>
    <property type="match status" value="1"/>
</dbReference>
<dbReference type="Pfam" id="PF00685">
    <property type="entry name" value="Sulfotransfer_1"/>
    <property type="match status" value="1"/>
</dbReference>
<dbReference type="SUPFAM" id="SSF52540">
    <property type="entry name" value="P-loop containing nucleoside triphosphate hydrolases"/>
    <property type="match status" value="1"/>
</dbReference>
<proteinExistence type="evidence at protein level"/>
<accession>P50235</accession>
<accession>O09038</accession>
<accession>P07631</accession>
<accession>Q04169</accession>